<gene>
    <name type="ordered locus">SAUSA300_1654</name>
</gene>
<evidence type="ECO:0000255" key="1"/>
<evidence type="ECO:0000305" key="2"/>
<name>Y1654_STAA3</name>
<dbReference type="EC" id="3.4.-.-"/>
<dbReference type="EMBL" id="CP000255">
    <property type="protein sequence ID" value="ABD20725.1"/>
    <property type="molecule type" value="Genomic_DNA"/>
</dbReference>
<dbReference type="RefSeq" id="WP_000161661.1">
    <property type="nucleotide sequence ID" value="NZ_CP027476.1"/>
</dbReference>
<dbReference type="SMR" id="Q2FG30"/>
<dbReference type="KEGG" id="saa:SAUSA300_1654"/>
<dbReference type="HOGENOM" id="CLU_017266_4_2_9"/>
<dbReference type="OMA" id="VGRTERH"/>
<dbReference type="Proteomes" id="UP000001939">
    <property type="component" value="Chromosome"/>
</dbReference>
<dbReference type="GO" id="GO:0016787">
    <property type="term" value="F:hydrolase activity"/>
    <property type="evidence" value="ECO:0007669"/>
    <property type="project" value="UniProtKB-KW"/>
</dbReference>
<dbReference type="GO" id="GO:0046872">
    <property type="term" value="F:metal ion binding"/>
    <property type="evidence" value="ECO:0007669"/>
    <property type="project" value="UniProtKB-KW"/>
</dbReference>
<dbReference type="CDD" id="cd01092">
    <property type="entry name" value="APP-like"/>
    <property type="match status" value="1"/>
</dbReference>
<dbReference type="FunFam" id="3.90.230.10:FF:000014">
    <property type="entry name" value="Aminopeptidase P family protein"/>
    <property type="match status" value="1"/>
</dbReference>
<dbReference type="Gene3D" id="3.90.230.10">
    <property type="entry name" value="Creatinase/methionine aminopeptidase superfamily"/>
    <property type="match status" value="1"/>
</dbReference>
<dbReference type="Gene3D" id="3.40.350.10">
    <property type="entry name" value="Creatinase/prolidase N-terminal domain"/>
    <property type="match status" value="1"/>
</dbReference>
<dbReference type="InterPro" id="IPR029149">
    <property type="entry name" value="Creatin/AminoP/Spt16_N"/>
</dbReference>
<dbReference type="InterPro" id="IPR036005">
    <property type="entry name" value="Creatinase/aminopeptidase-like"/>
</dbReference>
<dbReference type="InterPro" id="IPR000587">
    <property type="entry name" value="Creatinase_N"/>
</dbReference>
<dbReference type="InterPro" id="IPR000994">
    <property type="entry name" value="Pept_M24"/>
</dbReference>
<dbReference type="InterPro" id="IPR050659">
    <property type="entry name" value="Peptidase_M24B"/>
</dbReference>
<dbReference type="InterPro" id="IPR001131">
    <property type="entry name" value="Peptidase_M24B_aminopep-P_CS"/>
</dbReference>
<dbReference type="PANTHER" id="PTHR46112">
    <property type="entry name" value="AMINOPEPTIDASE"/>
    <property type="match status" value="1"/>
</dbReference>
<dbReference type="PANTHER" id="PTHR46112:SF10">
    <property type="entry name" value="DIPEPTIDASE YKVY-RELATED"/>
    <property type="match status" value="1"/>
</dbReference>
<dbReference type="Pfam" id="PF01321">
    <property type="entry name" value="Creatinase_N"/>
    <property type="match status" value="1"/>
</dbReference>
<dbReference type="Pfam" id="PF00557">
    <property type="entry name" value="Peptidase_M24"/>
    <property type="match status" value="1"/>
</dbReference>
<dbReference type="SUPFAM" id="SSF55920">
    <property type="entry name" value="Creatinase/aminopeptidase"/>
    <property type="match status" value="1"/>
</dbReference>
<dbReference type="SUPFAM" id="SSF53092">
    <property type="entry name" value="Creatinase/prolidase N-terminal domain"/>
    <property type="match status" value="1"/>
</dbReference>
<dbReference type="PROSITE" id="PS00491">
    <property type="entry name" value="PROLINE_PEPTIDASE"/>
    <property type="match status" value="1"/>
</dbReference>
<feature type="chain" id="PRO_0000299419" description="Uncharacterized peptidase SAUSA300_1654">
    <location>
        <begin position="1"/>
        <end position="351"/>
    </location>
</feature>
<feature type="binding site" evidence="1">
    <location>
        <position position="215"/>
    </location>
    <ligand>
        <name>Mn(2+)</name>
        <dbReference type="ChEBI" id="CHEBI:29035"/>
        <label>2</label>
    </ligand>
</feature>
<feature type="binding site" evidence="1">
    <location>
        <position position="226"/>
    </location>
    <ligand>
        <name>Mn(2+)</name>
        <dbReference type="ChEBI" id="CHEBI:29035"/>
        <label>1</label>
    </ligand>
</feature>
<feature type="binding site" evidence="1">
    <location>
        <position position="226"/>
    </location>
    <ligand>
        <name>Mn(2+)</name>
        <dbReference type="ChEBI" id="CHEBI:29035"/>
        <label>2</label>
    </ligand>
</feature>
<feature type="binding site" evidence="1">
    <location>
        <position position="290"/>
    </location>
    <ligand>
        <name>Mn(2+)</name>
        <dbReference type="ChEBI" id="CHEBI:29035"/>
        <label>1</label>
    </ligand>
</feature>
<feature type="binding site" evidence="1">
    <location>
        <position position="319"/>
    </location>
    <ligand>
        <name>Mn(2+)</name>
        <dbReference type="ChEBI" id="CHEBI:29035"/>
        <label>1</label>
    </ligand>
</feature>
<feature type="binding site" evidence="1">
    <location>
        <position position="333"/>
    </location>
    <ligand>
        <name>Mn(2+)</name>
        <dbReference type="ChEBI" id="CHEBI:29035"/>
        <label>1</label>
    </ligand>
</feature>
<feature type="binding site" evidence="1">
    <location>
        <position position="333"/>
    </location>
    <ligand>
        <name>Mn(2+)</name>
        <dbReference type="ChEBI" id="CHEBI:29035"/>
        <label>2</label>
    </ligand>
</feature>
<sequence length="351" mass="39554">MTKISKIIDELNNQQADAAWITTPLNVYYFTGYRSEPHERLFALLIKKDGKQVLFCPKMEVEEVKASPFTGEIVGYLDTENPFSLYPQTINKLLIESEHLTVARQKQLISGFNVNSFGDVDLTIKQLRNIKSEDEISKIRKAAELADKCIEIGVSYLKEGVTECEVVNHIEQTIKQYGVNEMSFDTMVLFGDHAASPHGTPGDRRLKSNEYVLFDLGVIYEHYCSDMTRTIKFGEPSKEAQEIYNIVLEAETSAIQAIKPGIPLKDIDHIARNIISEKGYGEYFPHRLGHGLGLQEHEYQDVSSTNSNLLEAGMVITIEPGIYVPGVAGVRIEDDILVTNEGYEVLTHYEK</sequence>
<proteinExistence type="inferred from homology"/>
<keyword id="KW-0378">Hydrolase</keyword>
<keyword id="KW-0464">Manganese</keyword>
<keyword id="KW-0479">Metal-binding</keyword>
<reference key="1">
    <citation type="journal article" date="2006" name="Lancet">
        <title>Complete genome sequence of USA300, an epidemic clone of community-acquired meticillin-resistant Staphylococcus aureus.</title>
        <authorList>
            <person name="Diep B.A."/>
            <person name="Gill S.R."/>
            <person name="Chang R.F."/>
            <person name="Phan T.H."/>
            <person name="Chen J.H."/>
            <person name="Davidson M.G."/>
            <person name="Lin F."/>
            <person name="Lin J."/>
            <person name="Carleton H.A."/>
            <person name="Mongodin E.F."/>
            <person name="Sensabaugh G.F."/>
            <person name="Perdreau-Remington F."/>
        </authorList>
    </citation>
    <scope>NUCLEOTIDE SEQUENCE [LARGE SCALE GENOMIC DNA]</scope>
    <source>
        <strain>USA300</strain>
    </source>
</reference>
<comment type="cofactor">
    <cofactor evidence="2">
        <name>Mn(2+)</name>
        <dbReference type="ChEBI" id="CHEBI:29035"/>
    </cofactor>
    <text evidence="2">Binds 2 manganese ions per subunit.</text>
</comment>
<comment type="similarity">
    <text evidence="2">Belongs to the peptidase M24B family.</text>
</comment>
<accession>Q2FG30</accession>
<organism>
    <name type="scientific">Staphylococcus aureus (strain USA300)</name>
    <dbReference type="NCBI Taxonomy" id="367830"/>
    <lineage>
        <taxon>Bacteria</taxon>
        <taxon>Bacillati</taxon>
        <taxon>Bacillota</taxon>
        <taxon>Bacilli</taxon>
        <taxon>Bacillales</taxon>
        <taxon>Staphylococcaceae</taxon>
        <taxon>Staphylococcus</taxon>
    </lineage>
</organism>
<protein>
    <recommendedName>
        <fullName>Uncharacterized peptidase SAUSA300_1654</fullName>
        <ecNumber>3.4.-.-</ecNumber>
    </recommendedName>
</protein>